<organism>
    <name type="scientific">Photorhabdus laumondii subsp. laumondii (strain DSM 15139 / CIP 105565 / TT01)</name>
    <name type="common">Photorhabdus luminescens subsp. laumondii</name>
    <dbReference type="NCBI Taxonomy" id="243265"/>
    <lineage>
        <taxon>Bacteria</taxon>
        <taxon>Pseudomonadati</taxon>
        <taxon>Pseudomonadota</taxon>
        <taxon>Gammaproteobacteria</taxon>
        <taxon>Enterobacterales</taxon>
        <taxon>Morganellaceae</taxon>
        <taxon>Photorhabdus</taxon>
    </lineage>
</organism>
<dbReference type="EMBL" id="BX571874">
    <property type="protein sequence ID" value="CAE16900.1"/>
    <property type="molecule type" value="Genomic_DNA"/>
</dbReference>
<dbReference type="RefSeq" id="WP_011148604.1">
    <property type="nucleotide sequence ID" value="NC_005126.1"/>
</dbReference>
<dbReference type="SMR" id="Q7MYY8"/>
<dbReference type="STRING" id="243265.plu4528"/>
<dbReference type="GeneID" id="48850737"/>
<dbReference type="KEGG" id="plu:plu4528"/>
<dbReference type="eggNOG" id="COG0858">
    <property type="taxonomic scope" value="Bacteria"/>
</dbReference>
<dbReference type="HOGENOM" id="CLU_089475_5_0_6"/>
<dbReference type="OrthoDB" id="307788at2"/>
<dbReference type="Proteomes" id="UP000002514">
    <property type="component" value="Chromosome"/>
</dbReference>
<dbReference type="GO" id="GO:0005829">
    <property type="term" value="C:cytosol"/>
    <property type="evidence" value="ECO:0007669"/>
    <property type="project" value="TreeGrafter"/>
</dbReference>
<dbReference type="GO" id="GO:0043024">
    <property type="term" value="F:ribosomal small subunit binding"/>
    <property type="evidence" value="ECO:0007669"/>
    <property type="project" value="TreeGrafter"/>
</dbReference>
<dbReference type="GO" id="GO:0030490">
    <property type="term" value="P:maturation of SSU-rRNA"/>
    <property type="evidence" value="ECO:0007669"/>
    <property type="project" value="UniProtKB-UniRule"/>
</dbReference>
<dbReference type="FunFam" id="3.30.300.20:FF:000007">
    <property type="entry name" value="Ribosome-binding factor A"/>
    <property type="match status" value="1"/>
</dbReference>
<dbReference type="Gene3D" id="3.30.300.20">
    <property type="match status" value="1"/>
</dbReference>
<dbReference type="HAMAP" id="MF_00003">
    <property type="entry name" value="RbfA"/>
    <property type="match status" value="1"/>
</dbReference>
<dbReference type="InterPro" id="IPR015946">
    <property type="entry name" value="KH_dom-like_a/b"/>
</dbReference>
<dbReference type="InterPro" id="IPR000238">
    <property type="entry name" value="RbfA"/>
</dbReference>
<dbReference type="InterPro" id="IPR023799">
    <property type="entry name" value="RbfA_dom_sf"/>
</dbReference>
<dbReference type="InterPro" id="IPR020053">
    <property type="entry name" value="Ribosome-bd_factorA_CS"/>
</dbReference>
<dbReference type="NCBIfam" id="TIGR00082">
    <property type="entry name" value="rbfA"/>
    <property type="match status" value="1"/>
</dbReference>
<dbReference type="PANTHER" id="PTHR33515">
    <property type="entry name" value="RIBOSOME-BINDING FACTOR A, CHLOROPLASTIC-RELATED"/>
    <property type="match status" value="1"/>
</dbReference>
<dbReference type="PANTHER" id="PTHR33515:SF1">
    <property type="entry name" value="RIBOSOME-BINDING FACTOR A, CHLOROPLASTIC-RELATED"/>
    <property type="match status" value="1"/>
</dbReference>
<dbReference type="Pfam" id="PF02033">
    <property type="entry name" value="RBFA"/>
    <property type="match status" value="1"/>
</dbReference>
<dbReference type="SUPFAM" id="SSF89919">
    <property type="entry name" value="Ribosome-binding factor A, RbfA"/>
    <property type="match status" value="1"/>
</dbReference>
<dbReference type="PROSITE" id="PS01319">
    <property type="entry name" value="RBFA"/>
    <property type="match status" value="1"/>
</dbReference>
<gene>
    <name evidence="1" type="primary">rbfA</name>
    <name type="ordered locus">plu4528</name>
</gene>
<comment type="function">
    <text evidence="1">One of several proteins that assist in the late maturation steps of the functional core of the 30S ribosomal subunit. Associates with free 30S ribosomal subunits (but not with 30S subunits that are part of 70S ribosomes or polysomes). Required for efficient processing of 16S rRNA. May interact with the 5'-terminal helix region of 16S rRNA.</text>
</comment>
<comment type="subunit">
    <text evidence="1">Monomer. Binds 30S ribosomal subunits, but not 50S ribosomal subunits or 70S ribosomes.</text>
</comment>
<comment type="subcellular location">
    <subcellularLocation>
        <location evidence="1">Cytoplasm</location>
    </subcellularLocation>
</comment>
<comment type="similarity">
    <text evidence="1">Belongs to the RbfA family.</text>
</comment>
<sequence length="136" mass="15429">MAREFSRTQRVAQEMQKEIAIILQREVKDPRIGMATVSGVEVSRDLAYAKVFVTFLNVLTEEHDSDVVKNGIKALNEASGFIRSLLGKAMRLRVVPELTFSYDNSLVEGMRMSNLVTNVVKNDEQRRASTDHKEEK</sequence>
<protein>
    <recommendedName>
        <fullName evidence="1">Ribosome-binding factor A</fullName>
    </recommendedName>
</protein>
<feature type="chain" id="PRO_0000102708" description="Ribosome-binding factor A">
    <location>
        <begin position="1"/>
        <end position="136"/>
    </location>
</feature>
<keyword id="KW-0963">Cytoplasm</keyword>
<keyword id="KW-1185">Reference proteome</keyword>
<keyword id="KW-0690">Ribosome biogenesis</keyword>
<accession>Q7MYY8</accession>
<name>RBFA_PHOLL</name>
<evidence type="ECO:0000255" key="1">
    <source>
        <dbReference type="HAMAP-Rule" id="MF_00003"/>
    </source>
</evidence>
<reference key="1">
    <citation type="journal article" date="2003" name="Nat. Biotechnol.">
        <title>The genome sequence of the entomopathogenic bacterium Photorhabdus luminescens.</title>
        <authorList>
            <person name="Duchaud E."/>
            <person name="Rusniok C."/>
            <person name="Frangeul L."/>
            <person name="Buchrieser C."/>
            <person name="Givaudan A."/>
            <person name="Taourit S."/>
            <person name="Bocs S."/>
            <person name="Boursaux-Eude C."/>
            <person name="Chandler M."/>
            <person name="Charles J.-F."/>
            <person name="Dassa E."/>
            <person name="Derose R."/>
            <person name="Derzelle S."/>
            <person name="Freyssinet G."/>
            <person name="Gaudriault S."/>
            <person name="Medigue C."/>
            <person name="Lanois A."/>
            <person name="Powell K."/>
            <person name="Siguier P."/>
            <person name="Vincent R."/>
            <person name="Wingate V."/>
            <person name="Zouine M."/>
            <person name="Glaser P."/>
            <person name="Boemare N."/>
            <person name="Danchin A."/>
            <person name="Kunst F."/>
        </authorList>
    </citation>
    <scope>NUCLEOTIDE SEQUENCE [LARGE SCALE GENOMIC DNA]</scope>
    <source>
        <strain>DSM 15139 / CIP 105565 / TT01</strain>
    </source>
</reference>
<proteinExistence type="inferred from homology"/>